<gene>
    <name evidence="7" type="primary">pydA</name>
</gene>
<accession>A0A8F4S6Z6</accession>
<name>PYDA_ACRSP</name>
<sequence length="4194" mass="457903">MKAERDTESIAGGREPIAVVGSGMRFPGSSSSPSKLWKLLLKPRDLLSRIPENRFNADSFYHPNSSHHGTTDVQESYFLEEDHRHFDAAFFNIKPVEAHAIDPQQRVLMEVVYESLEASGMTMESLAGSPTGVYVGLMCADYAELVNSDVNALPTYTPTGNARSIMSNRISYFFDWHGPSMTIDTACSSSLVAVHEAVQLLRSGDSDVAIAAGSNLMLAPLQYIAASKLKMLSADSRSRMWDANASGYARGEGVAAVVLKRLSSAIADGDHIECIIRETAINQDGRTKGITMPSSKAQADLIAKTYAKAGLDPRNPDQRCQYFEAHGTGTAAGDPKEAEAISKAFFHPGEVVSGASDPLYVGSIKTVIGHTEGTAGLAGLLRASLAVQHGTIPPNMLFDSLHPNVEPFYTNLKIATEPTAWPKLAEGTSRRCSINSFGFGGTNAHAIVENYVPPAPVQVSQASPGRQFTPFTFSAASERSLRGVLADYAEHLRLHPDISLHDLAYTLHARRSGHAVRTHVSADSVADLHTKIDGLLRAPTSSDGGSRNLGLRSRPWSSPLRALGVFTGQGAQWATMGRELVLHSQYCRDLVRDVDRMLQLLPEAERPDWSVMDQVTCDAPLSRIDSAVISQPLCTVVQIMLFDLLTSAGVRFQAVVGHSSGEIAAAYAAGYLTRDDAVKVAYYRGYFTSLTPSDRPGAMMAVGTSAEDANELCNLSMFKGRLAVAAINSSSSVTISGDRDAVEQAKEVLEDEKKFARILKVDKAYHSHHMLPCAEEYLRALERSGINPLQGRDDCVWHSSTYENRHVHGARDLAGQYWADNMVRPVLFSHCVDAAAAGSEARFDFAVELGPHPTLKGPALQTIQEAHKVTVPYTGLLQRGKDDVQAFSDALGYLWSQFSPSIVDLGAFDTLVSGIKSRKMLQDLPAYHWDHDNIFWHKSRPTKAFLTQKSIPHPLLGTRTTDVMDEQIRWRNHLLLNELPWIRGHQLQGQVIYPATAYLSTAIEAAMFLVPEGASAQLVEVRDFNLGKPLIFGEDGSGIETVFTLSDITKGEDKTYSASFTYHACSNADAEQLSTHATGRVIVITGEASAGLLPSQSKDLPNLVDIPEDRFYKSLETVGYGYSGDFRAMSSIQRKLNFSSSRVRVPLQEDDRVKLMLHPAMLDTALQGIFLAYCWPGDGSLDQLHVPTGIQSCRVNAGLCRQQLESATEVTSSSQLTGNPLVTKNLNGNVEISTEDGSCLVQMEGLKVVSFSEPTAEADRAVFTEYVWDVLAPDAERAMQGKRATAEDYELAFAIERVSVYYMRQLASLFPEETRSSLNLEWHFVCLFNFITHVLSTTGAGQRKTAKKEWLQDSAADIERIKERYADTVDMRLARAVGDNLPAVIRGETTMLEHITKDNLLDRFYEVGLGLKEFSGYVGKTVEQVVHRHPHMKMLEIGAGTGGATKVIMGGIGRAFSSYTYTDISPNFFETASEVFSSVADKMIFKTLDVEKDIVQQGYEEHSYDLVVASLVLHATKNLKQTLANTRRLLRPGGYLVIQEVCNNEPSRTGFMMCALPGWWLGQDDGRKLSPCVSTPEWNDLLLQTGFSGVDSTTHELDSVPFQLAVIVSQAVDERVSLLREPLALVGTDSPVAEHWDLVLVGGQSPKSSHLIEEIVGMLQSPNVSHTIVKTVDDIDSSTISETTAILFLEELDKPVFKGITERTLEGLKRLFETQRTVLWVTQGSRSADPYMGMSVGLGRTLILENPDLVLQFLDLEPGIEPEARTILEALLRLRQSDRWAKEGGTFEDVLWTNEHELAYINGELCLSRVHLAAPLNDRFNASKRTVLEAMNPQSVPMNLSLGQTIAPGLVLNDHLASKMLGSPDAVESESETVIRVSHSLLMPDLATIPPSYLVLGTNTGQNGRIVLAISETNGSYASVPPGRVLDVAPLQGEEPLLLSRLHTQLQVDGMLSICEDGSVLAIHEPPVDLASAIVERGASLGIHVYITTAASPSDRSWTQVHSYSPRTVVKSLLPPDISVFIDCSTRSLSQRAGSLIASCLPETCLKTTSASLPSLRRIRGFSVADMIDNLKGALPRALEKLAAPESSTNTLPLIRADQLGPGSSDADLFTPAIVAWNTTGKVPVQVSTVDSHTTFRSDRTYVFFGLTSDLAQSICDWMVTHGARNIVLTSRHPNIDARWKRTLKEAGVRVEVFSNDITDKAALVSLVDHIRQNLPPIAGIAHGAMVLNDVSFFEMTFEKMIQVIRPKVQGAIYLDELFQEPTLDFCIFFSSCTAIAGNRGQSAYTAANMFMSSLASQRREKGLAGSILHIGAVMGVGYINRGFKDYIFTALSRAGYMMVTEREFHLCFGEAVLASHPKSGRNPDVVTALETSKFGDTLPLWAKFPRFQYCLAAADSGSLKQAQKKHNAAVSTKLRLAEATTAEEALEIVQDSFYQKLQVVLQISPDTEKSQVLASGTDDLGIDSLVAVEIRSWFIKEIDTEIAVFKVLSGISIAELVEFAVENMPGELTPNMSDSLNAVPETPTAPVIPASPPSGSVSSAPSSDPPKTTAETSQHLSESSSKTSQPDEKQSEERDSSTASLEEPLETAYEKVLPVSPGQARFWFLKHLMEDQTTANNTILVSVQGQVRLDSLDAAVRRVGARHESLRTSFFVDKNQKAVQAISDSSRLYLQTKEIHSEAQVEAEFEALKNHAYDLINGECMQLIHLGMNATESYLLIGSHHIVMDGISLEVFLNDVQKAYNGQSLSSQVYQYSDYSEKLRQELGNGAMQKEIEYWRSEFAEAPTPLPLLPFAAVKQRKALTAYRHTSVSRTVDAKVARQISDTCRKLKANVFHFYLGVFEVLLFKLFGKNDVCIGMADANRWDDQVAQSIGMYLNLLPLRFRLDKQQSFETVLKDTRRKAYNAMSNSRLPFDALLDNLNCDRSTAFSPLFQAFINYRQGVRENRTLGSARGVTKKISLPRAGYDMSLDIIENPGGDTRLAFMLQDALYSEEETAQVLELYCNLLSELSGSPGQILKDVSLFTRSDVDKAVQLGRGAALPSQGSETLVHRIDAMIANPPQEIALRDHTGRSWTWEQLGQQVNRMASTLLQVNVTAGSVIAVHQEASPDLVFSLLAILRVGGIYVPLDSNLPEARLRSIITECDPSVLLLDQTTLARAGDLALPPSVTVLDVSSLPPRVKDAICPTTARRATDPAAILFTSGSTGVPKGVILSHGGLRNHVEALVHTHGFGRETVLQQSSVGFDMSLNQIFMSLANGGTLVLVPEPFRKDSAAVAKMILEQNITYTSATPSEYLAWLRHGSNSLFQSTSWRFATAGGEQFTPQLLEAFQTLGTQFEHPFHAFNAYGPTECTLSSNEMKVSLEASSSARQITAGKALPNCSFYVVDDSLDPLPVGWPGEILIGGAGVALGYLNNPAETARKFLVDPKASSSAMGQGWGRMYRTGDKGVLRPDGTLQILGRIEGDTQIKLRGLRIEMQDVEKSILDASEGQISEVGVTPRGDPTILVAHVVLSRNASFSNKQQYLRDLSASLPLPQYMRPAAIIPIDCMPLTASGKVDRRALQGLELSSTRGQSHIQDQGAATQLTEAESELAQIWKDVLPQQLQEVHLIDGASDFFQVGGNSMLLIELRRLVASRLQVDIPLLRLFESSTLGAMAAVIQDLSTVAQVPEVGWEAETQVPSSWAQGDVQPAHLQSHSSPRTVVITGATGFLGKQLVRLLVANANIHRVHCIAVRNVEKLAEFAGSDKVSIHPGDLAQPRCGLSEADAVSIFRSTDAIIHNGADVSFLKSYSSLRAPNVLSTKELVKLSLPRLIPLHYVSTATVGKLNRSDTLAPESLARFPPGATFSDGYAASKWASEVFLENATKKLGLPTFIHRPSSITGDQAAENDIVPNLLKYSSLIKALPDTAKWSGYVDLISVERAAAGIIGSVLQDRPDLGTTAPETQFLHQTGEKVIPAQSIKAVLSPKDEPEWDSLAMAEWVSRAVQKGMNPLIGEFLLSVDRGQGLSVGQKLLLKTDQAKKGMNFSTSERLQCRRDKTNPGRQVCDQGPSSVHPQPAFHRGRDVSPRHPALDHPDPIQGRSHVPHVRETEQQTDGVPRHGARGSKLISTDEQIDDAESVVDGVDHDEDPAPPQASRCPPSWEVGVCALAEGRLHPGSEDEVLVKSKGEYPCGSDGREEAEEAEWQCDEGHGDGEPDD</sequence>
<organism>
    <name type="scientific">Acremonium sp</name>
    <dbReference type="NCBI Taxonomy" id="2046025"/>
    <lineage>
        <taxon>Eukaryota</taxon>
        <taxon>Fungi</taxon>
        <taxon>Dikarya</taxon>
        <taxon>Ascomycota</taxon>
        <taxon>Pezizomycotina</taxon>
        <taxon>Sordariomycetes</taxon>
        <taxon>Hypocreomycetidae</taxon>
        <taxon>Hypocreales</taxon>
        <taxon>Hypocreales incertae sedis</taxon>
        <taxon>Acremonium</taxon>
    </lineage>
</organism>
<proteinExistence type="evidence at protein level"/>
<protein>
    <recommendedName>
        <fullName evidence="7">Hybrid PKS-NRPS synthetase pydA</fullName>
        <ecNumber evidence="6">2.3.1.-</ecNumber>
        <ecNumber evidence="6">6.3.2.-</ecNumber>
    </recommendedName>
    <alternativeName>
        <fullName evidence="7">Pyrrocidines biosynthesis cluster protein A</fullName>
    </alternativeName>
</protein>
<dbReference type="EC" id="2.3.1.-" evidence="6"/>
<dbReference type="EC" id="6.3.2.-" evidence="6"/>
<dbReference type="EMBL" id="MW690134">
    <property type="protein sequence ID" value="QXF14600.1"/>
    <property type="molecule type" value="Genomic_DNA"/>
</dbReference>
<dbReference type="SMR" id="A0A8F4S6Z6"/>
<dbReference type="GO" id="GO:0004315">
    <property type="term" value="F:3-oxoacyl-[acyl-carrier-protein] synthase activity"/>
    <property type="evidence" value="ECO:0007669"/>
    <property type="project" value="InterPro"/>
</dbReference>
<dbReference type="GO" id="GO:0004312">
    <property type="term" value="F:fatty acid synthase activity"/>
    <property type="evidence" value="ECO:0007669"/>
    <property type="project" value="TreeGrafter"/>
</dbReference>
<dbReference type="GO" id="GO:0016874">
    <property type="term" value="F:ligase activity"/>
    <property type="evidence" value="ECO:0007669"/>
    <property type="project" value="UniProtKB-KW"/>
</dbReference>
<dbReference type="GO" id="GO:0008168">
    <property type="term" value="F:methyltransferase activity"/>
    <property type="evidence" value="ECO:0007669"/>
    <property type="project" value="UniProtKB-KW"/>
</dbReference>
<dbReference type="GO" id="GO:0016491">
    <property type="term" value="F:oxidoreductase activity"/>
    <property type="evidence" value="ECO:0007669"/>
    <property type="project" value="UniProtKB-KW"/>
</dbReference>
<dbReference type="GO" id="GO:0031177">
    <property type="term" value="F:phosphopantetheine binding"/>
    <property type="evidence" value="ECO:0007669"/>
    <property type="project" value="InterPro"/>
</dbReference>
<dbReference type="GO" id="GO:0006633">
    <property type="term" value="P:fatty acid biosynthetic process"/>
    <property type="evidence" value="ECO:0007669"/>
    <property type="project" value="InterPro"/>
</dbReference>
<dbReference type="GO" id="GO:0032259">
    <property type="term" value="P:methylation"/>
    <property type="evidence" value="ECO:0007669"/>
    <property type="project" value="UniProtKB-KW"/>
</dbReference>
<dbReference type="GO" id="GO:0009403">
    <property type="term" value="P:toxin biosynthetic process"/>
    <property type="evidence" value="ECO:0007669"/>
    <property type="project" value="UniProtKB-ARBA"/>
</dbReference>
<dbReference type="CDD" id="cd05930">
    <property type="entry name" value="A_NRPS"/>
    <property type="match status" value="1"/>
</dbReference>
<dbReference type="CDD" id="cd02440">
    <property type="entry name" value="AdoMet_MTases"/>
    <property type="match status" value="1"/>
</dbReference>
<dbReference type="CDD" id="cd19532">
    <property type="entry name" value="C_PKS-NRPS"/>
    <property type="match status" value="1"/>
</dbReference>
<dbReference type="CDD" id="cd00833">
    <property type="entry name" value="PKS"/>
    <property type="match status" value="1"/>
</dbReference>
<dbReference type="FunFam" id="3.40.47.10:FF:000019">
    <property type="entry name" value="Polyketide synthase type I"/>
    <property type="match status" value="1"/>
</dbReference>
<dbReference type="Gene3D" id="3.30.300.30">
    <property type="match status" value="1"/>
</dbReference>
<dbReference type="Gene3D" id="3.40.47.10">
    <property type="match status" value="1"/>
</dbReference>
<dbReference type="Gene3D" id="1.10.1200.10">
    <property type="entry name" value="ACP-like"/>
    <property type="match status" value="1"/>
</dbReference>
<dbReference type="Gene3D" id="3.30.559.10">
    <property type="entry name" value="Chloramphenicol acetyltransferase-like domain"/>
    <property type="match status" value="1"/>
</dbReference>
<dbReference type="Gene3D" id="3.40.366.10">
    <property type="entry name" value="Malonyl-Coenzyme A Acyl Carrier Protein, domain 2"/>
    <property type="match status" value="1"/>
</dbReference>
<dbReference type="Gene3D" id="3.40.50.12780">
    <property type="entry name" value="N-terminal domain of ligase-like"/>
    <property type="match status" value="1"/>
</dbReference>
<dbReference type="Gene3D" id="3.40.50.720">
    <property type="entry name" value="NAD(P)-binding Rossmann-like Domain"/>
    <property type="match status" value="3"/>
</dbReference>
<dbReference type="Gene3D" id="3.30.559.30">
    <property type="entry name" value="Nonribosomal peptide synthetase, condensation domain"/>
    <property type="match status" value="1"/>
</dbReference>
<dbReference type="Gene3D" id="3.10.129.110">
    <property type="entry name" value="Polyketide synthase dehydratase"/>
    <property type="match status" value="1"/>
</dbReference>
<dbReference type="Gene3D" id="3.40.50.150">
    <property type="entry name" value="Vaccinia Virus protein VP39"/>
    <property type="match status" value="1"/>
</dbReference>
<dbReference type="InterPro" id="IPR010071">
    <property type="entry name" value="AA_adenyl_dom"/>
</dbReference>
<dbReference type="InterPro" id="IPR001227">
    <property type="entry name" value="Ac_transferase_dom_sf"/>
</dbReference>
<dbReference type="InterPro" id="IPR036736">
    <property type="entry name" value="ACP-like_sf"/>
</dbReference>
<dbReference type="InterPro" id="IPR014043">
    <property type="entry name" value="Acyl_transferase_dom"/>
</dbReference>
<dbReference type="InterPro" id="IPR016035">
    <property type="entry name" value="Acyl_Trfase/lysoPLipase"/>
</dbReference>
<dbReference type="InterPro" id="IPR045851">
    <property type="entry name" value="AMP-bd_C_sf"/>
</dbReference>
<dbReference type="InterPro" id="IPR020845">
    <property type="entry name" value="AMP-binding_CS"/>
</dbReference>
<dbReference type="InterPro" id="IPR000873">
    <property type="entry name" value="AMP-dep_synth/lig_dom"/>
</dbReference>
<dbReference type="InterPro" id="IPR042099">
    <property type="entry name" value="ANL_N_sf"/>
</dbReference>
<dbReference type="InterPro" id="IPR023213">
    <property type="entry name" value="CAT-like_dom_sf"/>
</dbReference>
<dbReference type="InterPro" id="IPR001242">
    <property type="entry name" value="Condensatn"/>
</dbReference>
<dbReference type="InterPro" id="IPR013120">
    <property type="entry name" value="Far_NAD-bd"/>
</dbReference>
<dbReference type="InterPro" id="IPR018201">
    <property type="entry name" value="Ketoacyl_synth_AS"/>
</dbReference>
<dbReference type="InterPro" id="IPR014031">
    <property type="entry name" value="Ketoacyl_synth_C"/>
</dbReference>
<dbReference type="InterPro" id="IPR014030">
    <property type="entry name" value="Ketoacyl_synth_N"/>
</dbReference>
<dbReference type="InterPro" id="IPR016036">
    <property type="entry name" value="Malonyl_transacylase_ACP-bd"/>
</dbReference>
<dbReference type="InterPro" id="IPR013217">
    <property type="entry name" value="Methyltransf_12"/>
</dbReference>
<dbReference type="InterPro" id="IPR036291">
    <property type="entry name" value="NAD(P)-bd_dom_sf"/>
</dbReference>
<dbReference type="InterPro" id="IPR032821">
    <property type="entry name" value="PKS_assoc"/>
</dbReference>
<dbReference type="InterPro" id="IPR020841">
    <property type="entry name" value="PKS_Beta-ketoAc_synthase_dom"/>
</dbReference>
<dbReference type="InterPro" id="IPR042104">
    <property type="entry name" value="PKS_dehydratase_sf"/>
</dbReference>
<dbReference type="InterPro" id="IPR020807">
    <property type="entry name" value="PKS_DH"/>
</dbReference>
<dbReference type="InterPro" id="IPR049551">
    <property type="entry name" value="PKS_DH_C"/>
</dbReference>
<dbReference type="InterPro" id="IPR049552">
    <property type="entry name" value="PKS_DH_N"/>
</dbReference>
<dbReference type="InterPro" id="IPR013968">
    <property type="entry name" value="PKS_KR"/>
</dbReference>
<dbReference type="InterPro" id="IPR049900">
    <property type="entry name" value="PKS_mFAS_DH"/>
</dbReference>
<dbReference type="InterPro" id="IPR050091">
    <property type="entry name" value="PKS_NRPS_Biosynth_Enz"/>
</dbReference>
<dbReference type="InterPro" id="IPR020806">
    <property type="entry name" value="PKS_PP-bd"/>
</dbReference>
<dbReference type="InterPro" id="IPR009081">
    <property type="entry name" value="PP-bd_ACP"/>
</dbReference>
<dbReference type="InterPro" id="IPR006162">
    <property type="entry name" value="Ppantetheine_attach_site"/>
</dbReference>
<dbReference type="InterPro" id="IPR029063">
    <property type="entry name" value="SAM-dependent_MTases_sf"/>
</dbReference>
<dbReference type="InterPro" id="IPR016039">
    <property type="entry name" value="Thiolase-like"/>
</dbReference>
<dbReference type="NCBIfam" id="TIGR01733">
    <property type="entry name" value="AA-adenyl-dom"/>
    <property type="match status" value="1"/>
</dbReference>
<dbReference type="PANTHER" id="PTHR43775">
    <property type="entry name" value="FATTY ACID SYNTHASE"/>
    <property type="match status" value="1"/>
</dbReference>
<dbReference type="PANTHER" id="PTHR43775:SF20">
    <property type="entry name" value="HYBRID PKS-NRPS SYNTHETASE APDA"/>
    <property type="match status" value="1"/>
</dbReference>
<dbReference type="Pfam" id="PF00698">
    <property type="entry name" value="Acyl_transf_1"/>
    <property type="match status" value="1"/>
</dbReference>
<dbReference type="Pfam" id="PF00501">
    <property type="entry name" value="AMP-binding"/>
    <property type="match status" value="1"/>
</dbReference>
<dbReference type="Pfam" id="PF00668">
    <property type="entry name" value="Condensation"/>
    <property type="match status" value="1"/>
</dbReference>
<dbReference type="Pfam" id="PF16197">
    <property type="entry name" value="KAsynt_C_assoc"/>
    <property type="match status" value="1"/>
</dbReference>
<dbReference type="Pfam" id="PF00109">
    <property type="entry name" value="ketoacyl-synt"/>
    <property type="match status" value="1"/>
</dbReference>
<dbReference type="Pfam" id="PF02801">
    <property type="entry name" value="Ketoacyl-synt_C"/>
    <property type="match status" value="1"/>
</dbReference>
<dbReference type="Pfam" id="PF08659">
    <property type="entry name" value="KR"/>
    <property type="match status" value="1"/>
</dbReference>
<dbReference type="Pfam" id="PF08242">
    <property type="entry name" value="Methyltransf_12"/>
    <property type="match status" value="1"/>
</dbReference>
<dbReference type="Pfam" id="PF07993">
    <property type="entry name" value="NAD_binding_4"/>
    <property type="match status" value="1"/>
</dbReference>
<dbReference type="Pfam" id="PF21089">
    <property type="entry name" value="PKS_DH_N"/>
    <property type="match status" value="1"/>
</dbReference>
<dbReference type="Pfam" id="PF00550">
    <property type="entry name" value="PP-binding"/>
    <property type="match status" value="1"/>
</dbReference>
<dbReference type="Pfam" id="PF14765">
    <property type="entry name" value="PS-DH"/>
    <property type="match status" value="1"/>
</dbReference>
<dbReference type="SMART" id="SM00827">
    <property type="entry name" value="PKS_AT"/>
    <property type="match status" value="1"/>
</dbReference>
<dbReference type="SMART" id="SM00826">
    <property type="entry name" value="PKS_DH"/>
    <property type="match status" value="1"/>
</dbReference>
<dbReference type="SMART" id="SM00822">
    <property type="entry name" value="PKS_KR"/>
    <property type="match status" value="1"/>
</dbReference>
<dbReference type="SMART" id="SM00825">
    <property type="entry name" value="PKS_KS"/>
    <property type="match status" value="1"/>
</dbReference>
<dbReference type="SMART" id="SM00823">
    <property type="entry name" value="PKS_PP"/>
    <property type="match status" value="2"/>
</dbReference>
<dbReference type="SUPFAM" id="SSF56801">
    <property type="entry name" value="Acetyl-CoA synthetase-like"/>
    <property type="match status" value="1"/>
</dbReference>
<dbReference type="SUPFAM" id="SSF47336">
    <property type="entry name" value="ACP-like"/>
    <property type="match status" value="2"/>
</dbReference>
<dbReference type="SUPFAM" id="SSF52777">
    <property type="entry name" value="CoA-dependent acyltransferases"/>
    <property type="match status" value="2"/>
</dbReference>
<dbReference type="SUPFAM" id="SSF52151">
    <property type="entry name" value="FabD/lysophospholipase-like"/>
    <property type="match status" value="1"/>
</dbReference>
<dbReference type="SUPFAM" id="SSF51735">
    <property type="entry name" value="NAD(P)-binding Rossmann-fold domains"/>
    <property type="match status" value="3"/>
</dbReference>
<dbReference type="SUPFAM" id="SSF55048">
    <property type="entry name" value="Probable ACP-binding domain of malonyl-CoA ACP transacylase"/>
    <property type="match status" value="1"/>
</dbReference>
<dbReference type="SUPFAM" id="SSF53335">
    <property type="entry name" value="S-adenosyl-L-methionine-dependent methyltransferases"/>
    <property type="match status" value="1"/>
</dbReference>
<dbReference type="SUPFAM" id="SSF53901">
    <property type="entry name" value="Thiolase-like"/>
    <property type="match status" value="1"/>
</dbReference>
<dbReference type="PROSITE" id="PS00455">
    <property type="entry name" value="AMP_BINDING"/>
    <property type="match status" value="1"/>
</dbReference>
<dbReference type="PROSITE" id="PS50075">
    <property type="entry name" value="CARRIER"/>
    <property type="match status" value="2"/>
</dbReference>
<dbReference type="PROSITE" id="PS00606">
    <property type="entry name" value="KS3_1"/>
    <property type="match status" value="1"/>
</dbReference>
<dbReference type="PROSITE" id="PS52004">
    <property type="entry name" value="KS3_2"/>
    <property type="match status" value="1"/>
</dbReference>
<dbReference type="PROSITE" id="PS00012">
    <property type="entry name" value="PHOSPHOPANTETHEINE"/>
    <property type="match status" value="2"/>
</dbReference>
<dbReference type="PROSITE" id="PS52019">
    <property type="entry name" value="PKS_MFAS_DH"/>
    <property type="match status" value="1"/>
</dbReference>
<feature type="chain" id="PRO_0000458422" description="Hybrid PKS-NRPS synthetase pydA">
    <location>
        <begin position="1"/>
        <end position="4194"/>
    </location>
</feature>
<feature type="domain" description="Ketosynthase family 3 (KS3)" evidence="3">
    <location>
        <begin position="14"/>
        <end position="450"/>
    </location>
</feature>
<feature type="domain" description="Malonyl-CoA:ACP transacylase (MAT)" evidence="1 9">
    <location>
        <begin position="565"/>
        <end position="887"/>
    </location>
</feature>
<feature type="domain" description="PKS/mFAS DH" evidence="4">
    <location>
        <begin position="953"/>
        <end position="1257"/>
    </location>
</feature>
<feature type="domain" description="Ketoreductase (KR)" evidence="1 9">
    <location>
        <begin position="2141"/>
        <end position="2314"/>
    </location>
</feature>
<feature type="domain" description="Carrier 1" evidence="2">
    <location>
        <begin position="2421"/>
        <end position="2505"/>
    </location>
</feature>
<feature type="domain" description="Carrier 2" evidence="2">
    <location>
        <begin position="3580"/>
        <end position="3660"/>
    </location>
</feature>
<feature type="domain" description="Thioester reductase (TE)" evidence="1 9">
    <location>
        <begin position="3701"/>
        <end position="3920"/>
    </location>
</feature>
<feature type="region of interest" description="N-terminal hotdog fold" evidence="4">
    <location>
        <begin position="953"/>
        <end position="1088"/>
    </location>
</feature>
<feature type="region of interest" description="C-terminal hotdog fold" evidence="4">
    <location>
        <begin position="1103"/>
        <end position="1257"/>
    </location>
</feature>
<feature type="region of interest" description="Methyltransferase (cMeT) domain" evidence="1 9">
    <location>
        <begin position="1302"/>
        <end position="1596"/>
    </location>
</feature>
<feature type="region of interest" description="Disordered" evidence="5">
    <location>
        <begin position="2512"/>
        <end position="2583"/>
    </location>
</feature>
<feature type="region of interest" description="Condensation" evidence="1 9">
    <location>
        <begin position="2591"/>
        <end position="3023"/>
    </location>
</feature>
<feature type="region of interest" description="Adenylation" evidence="1 9">
    <location>
        <begin position="3056"/>
        <end position="3467"/>
    </location>
</feature>
<feature type="region of interest" description="Disordered" evidence="5">
    <location>
        <begin position="4031"/>
        <end position="4110"/>
    </location>
</feature>
<feature type="region of interest" description="Disordered" evidence="5">
    <location>
        <begin position="4163"/>
        <end position="4194"/>
    </location>
</feature>
<feature type="compositionally biased region" description="Low complexity" evidence="5">
    <location>
        <begin position="2526"/>
        <end position="2547"/>
    </location>
</feature>
<feature type="compositionally biased region" description="Polar residues" evidence="5">
    <location>
        <begin position="2550"/>
        <end position="2565"/>
    </location>
</feature>
<feature type="compositionally biased region" description="Basic and acidic residues" evidence="5">
    <location>
        <begin position="2566"/>
        <end position="2577"/>
    </location>
</feature>
<feature type="compositionally biased region" description="Basic and acidic residues" evidence="5">
    <location>
        <begin position="4057"/>
        <end position="4072"/>
    </location>
</feature>
<feature type="compositionally biased region" description="Acidic residues" evidence="5">
    <location>
        <begin position="4174"/>
        <end position="4183"/>
    </location>
</feature>
<feature type="compositionally biased region" description="Basic and acidic residues" evidence="5">
    <location>
        <begin position="4184"/>
        <end position="4194"/>
    </location>
</feature>
<feature type="active site" description="For beta-ketoacyl synthase activity" evidence="3">
    <location>
        <position position="187"/>
    </location>
</feature>
<feature type="active site" description="For beta-ketoacyl synthase activity" evidence="3">
    <location>
        <position position="326"/>
    </location>
</feature>
<feature type="active site" description="For beta-ketoacyl synthase activity" evidence="3">
    <location>
        <position position="370"/>
    </location>
</feature>
<feature type="active site" description="Proton acceptor; for dehydratase activity" evidence="4">
    <location>
        <position position="985"/>
    </location>
</feature>
<feature type="active site" description="Proton donor; for dehydratase activity" evidence="4">
    <location>
        <position position="1163"/>
    </location>
</feature>
<feature type="modified residue" description="O-(pantetheine 4'-phosphoryl)serine" evidence="2">
    <location>
        <position position="2465"/>
    </location>
</feature>
<feature type="modified residue" description="O-(pantetheine 4'-phosphoryl)serine" evidence="2">
    <location>
        <position position="3620"/>
    </location>
</feature>
<reference key="1">
    <citation type="journal article" date="2021" name="J. Am. Chem. Soc.">
        <title>Biosynthesis of para-cyclophane-containing hirsutellone family of fungal natural products.</title>
        <authorList>
            <person name="Ohashi M."/>
            <person name="Kakule T.B."/>
            <person name="Tang M.C."/>
            <person name="Jamieson C.S."/>
            <person name="Liu M."/>
            <person name="Zhao Y.L."/>
            <person name="Houk K.N."/>
            <person name="Tang Y."/>
        </authorList>
    </citation>
    <scope>NUCLEOTIDE SEQUENCE [GENOMIC DNA]</scope>
    <scope>FUNCTION</scope>
    <scope>CATALYTIC ACTIVITY</scope>
    <scope>DOMAIN</scope>
    <scope>PATHWAY</scope>
</reference>
<evidence type="ECO:0000255" key="1"/>
<evidence type="ECO:0000255" key="2">
    <source>
        <dbReference type="PROSITE-ProRule" id="PRU00258"/>
    </source>
</evidence>
<evidence type="ECO:0000255" key="3">
    <source>
        <dbReference type="PROSITE-ProRule" id="PRU01348"/>
    </source>
</evidence>
<evidence type="ECO:0000255" key="4">
    <source>
        <dbReference type="PROSITE-ProRule" id="PRU01363"/>
    </source>
</evidence>
<evidence type="ECO:0000256" key="5">
    <source>
        <dbReference type="SAM" id="MobiDB-lite"/>
    </source>
</evidence>
<evidence type="ECO:0000269" key="6">
    <source>
    </source>
</evidence>
<evidence type="ECO:0000303" key="7">
    <source>
    </source>
</evidence>
<evidence type="ECO:0000305" key="8"/>
<evidence type="ECO:0000305" key="9">
    <source>
    </source>
</evidence>
<keyword id="KW-0436">Ligase</keyword>
<keyword id="KW-0489">Methyltransferase</keyword>
<keyword id="KW-0511">Multifunctional enzyme</keyword>
<keyword id="KW-0560">Oxidoreductase</keyword>
<keyword id="KW-0596">Phosphopantetheine</keyword>
<keyword id="KW-0597">Phosphoprotein</keyword>
<keyword id="KW-0677">Repeat</keyword>
<keyword id="KW-0808">Transferase</keyword>
<keyword id="KW-0843">Virulence</keyword>
<comment type="function">
    <text evidence="6 9">Hybrid PKS-NRPS synthetase; part of the gene cluster that mediates the biosynthesis of pyrrocidines, fungal natural products containing a macrocyclic para-cyclophane connected to a decahydrofluorene ring system that show potent antibiotic activities toward Gram-negative bacteria (PubMed:33834778). Within the pathway, the PKS-NRPS pydA, with the help of the trans-enoyl reductase pydC, synthesize the polyketide-tyrosyl acyl thioester product which can be reductively off-loaded by the terminal reductase (R) domain in pydA (PubMed:33834778). The PKS module of pydA acts in combination with the trans-acting enoyl reductase pydC to produce a methylated polyketide attached to the ACP domain (PubMed:33834778). In parallel, the adenylation (A) domain of the NRPS module activated L-tyrosine, which is then transferred to the ACP domain. The condensation (C) domain subsequently link this group to the polyketide chain, forming an enzyme-bound amide (PubMed:33834778). The alpha/beta hydrolase pydG is then required to catalyze the subsequent Knoevenagel condensation that affords the 3-pyrrolin-2-one ring, whereas the four proteins pydB, pydE, pydX and pydZ then function synergistically to form the cyclophane. PydB and the membrane-bound pydX and pydZ are lipid-binding proteins that can sequester and mold the pdyG product into the inverse S-shape. Binding of the medium chain reductase pydE to the complex would trigger the cascade oxidative cyclization. PydY is involved in the Diels-Alder cycloaddition that forms the decahydrofluorene core. Additional non-enzymatic hydroxylation yields pyrrocidine A2 which can be further reduced into pyrrocidine B by an endogenous reductase (Probable).</text>
</comment>
<comment type="cofactor">
    <cofactor evidence="2">
        <name>pantetheine 4'-phosphate</name>
        <dbReference type="ChEBI" id="CHEBI:47942"/>
    </cofactor>
</comment>
<comment type="pathway">
    <text evidence="6">Mycotoxin biosynthesis.</text>
</comment>
<comment type="domain">
    <text evidence="9">NRP synthetases are composed of discrete domains (adenylation (A), thiolation (T) or peptidyl carrier protein (PCP) and condensation (C) domains) which when grouped together are referred to as a single module. Each module is responsible for the recognition (via the A domain) and incorporation of a single amino acid into the growing peptide product. Thus, an NRP synthetase is generally composed of one or more modules and can terminate in a thioesterase domain (TE) that releases the newly synthesized peptide from the enzyme. Occasionally, epimerase (E) domains (responsible for L- to D-amino acid conversion) are present within the NRP synthetase. XenE also contains a polyketide synthase module (PKS) consisting of several catalytic domains including a ketoacyl synthase domain (KS), an acyl transferase domain (AT), a dehydratase domain (DH), a methyltransferase domain (cMeT), and a ketoreductase domain (KR). Instead of a thioesterase domain (TE), XenE finishes with a reductase-like domain (R) for peptide release. XenE has the following architecture: KS-MAT-DH-cMET-KR-PCP-C-A-T-R.</text>
</comment>
<comment type="similarity">
    <text evidence="8">In the C-terminal section; belongs to the NRP synthetase family.</text>
</comment>